<feature type="chain" id="PRO_1000136038" description="Ribosome rescue factor SmrB">
    <location>
        <begin position="1"/>
        <end position="183"/>
    </location>
</feature>
<feature type="domain" description="Smr" evidence="1">
    <location>
        <begin position="98"/>
        <end position="173"/>
    </location>
</feature>
<dbReference type="EC" id="3.1.-.-" evidence="1"/>
<dbReference type="EMBL" id="CU928160">
    <property type="protein sequence ID" value="CAQ99250.1"/>
    <property type="molecule type" value="Genomic_DNA"/>
</dbReference>
<dbReference type="RefSeq" id="WP_000730806.1">
    <property type="nucleotide sequence ID" value="NC_011741.1"/>
</dbReference>
<dbReference type="SMR" id="B7M6L2"/>
<dbReference type="GeneID" id="93774844"/>
<dbReference type="KEGG" id="ecr:ECIAI1_2408"/>
<dbReference type="HOGENOM" id="CLU_055978_4_0_6"/>
<dbReference type="GO" id="GO:0004521">
    <property type="term" value="F:RNA endonuclease activity"/>
    <property type="evidence" value="ECO:0007669"/>
    <property type="project" value="UniProtKB-UniRule"/>
</dbReference>
<dbReference type="GO" id="GO:0019843">
    <property type="term" value="F:rRNA binding"/>
    <property type="evidence" value="ECO:0007669"/>
    <property type="project" value="UniProtKB-UniRule"/>
</dbReference>
<dbReference type="GO" id="GO:0072344">
    <property type="term" value="P:rescue of stalled ribosome"/>
    <property type="evidence" value="ECO:0007669"/>
    <property type="project" value="UniProtKB-UniRule"/>
</dbReference>
<dbReference type="Gene3D" id="3.30.1370.110">
    <property type="match status" value="1"/>
</dbReference>
<dbReference type="HAMAP" id="MF_01042">
    <property type="entry name" value="SmrB"/>
    <property type="match status" value="1"/>
</dbReference>
<dbReference type="InterPro" id="IPR002625">
    <property type="entry name" value="Smr_dom"/>
</dbReference>
<dbReference type="InterPro" id="IPR036063">
    <property type="entry name" value="Smr_dom_sf"/>
</dbReference>
<dbReference type="InterPro" id="IPR022990">
    <property type="entry name" value="SmrB-like"/>
</dbReference>
<dbReference type="NCBIfam" id="NF003432">
    <property type="entry name" value="PRK04946.1"/>
    <property type="match status" value="1"/>
</dbReference>
<dbReference type="PANTHER" id="PTHR35562">
    <property type="entry name" value="DNA ENDONUCLEASE SMRA-RELATED"/>
    <property type="match status" value="1"/>
</dbReference>
<dbReference type="PANTHER" id="PTHR35562:SF1">
    <property type="entry name" value="UPF0115 PROTEIN YFCN"/>
    <property type="match status" value="1"/>
</dbReference>
<dbReference type="Pfam" id="PF01713">
    <property type="entry name" value="Smr"/>
    <property type="match status" value="1"/>
</dbReference>
<dbReference type="SMART" id="SM00463">
    <property type="entry name" value="SMR"/>
    <property type="match status" value="1"/>
</dbReference>
<dbReference type="SUPFAM" id="SSF160443">
    <property type="entry name" value="SMR domain-like"/>
    <property type="match status" value="1"/>
</dbReference>
<dbReference type="PROSITE" id="PS50828">
    <property type="entry name" value="SMR"/>
    <property type="match status" value="1"/>
</dbReference>
<organism>
    <name type="scientific">Escherichia coli O8 (strain IAI1)</name>
    <dbReference type="NCBI Taxonomy" id="585034"/>
    <lineage>
        <taxon>Bacteria</taxon>
        <taxon>Pseudomonadati</taxon>
        <taxon>Pseudomonadota</taxon>
        <taxon>Gammaproteobacteria</taxon>
        <taxon>Enterobacterales</taxon>
        <taxon>Enterobacteriaceae</taxon>
        <taxon>Escherichia</taxon>
    </lineage>
</organism>
<name>SMRB_ECO8A</name>
<reference key="1">
    <citation type="journal article" date="2009" name="PLoS Genet.">
        <title>Organised genome dynamics in the Escherichia coli species results in highly diverse adaptive paths.</title>
        <authorList>
            <person name="Touchon M."/>
            <person name="Hoede C."/>
            <person name="Tenaillon O."/>
            <person name="Barbe V."/>
            <person name="Baeriswyl S."/>
            <person name="Bidet P."/>
            <person name="Bingen E."/>
            <person name="Bonacorsi S."/>
            <person name="Bouchier C."/>
            <person name="Bouvet O."/>
            <person name="Calteau A."/>
            <person name="Chiapello H."/>
            <person name="Clermont O."/>
            <person name="Cruveiller S."/>
            <person name="Danchin A."/>
            <person name="Diard M."/>
            <person name="Dossat C."/>
            <person name="Karoui M.E."/>
            <person name="Frapy E."/>
            <person name="Garry L."/>
            <person name="Ghigo J.M."/>
            <person name="Gilles A.M."/>
            <person name="Johnson J."/>
            <person name="Le Bouguenec C."/>
            <person name="Lescat M."/>
            <person name="Mangenot S."/>
            <person name="Martinez-Jehanne V."/>
            <person name="Matic I."/>
            <person name="Nassif X."/>
            <person name="Oztas S."/>
            <person name="Petit M.A."/>
            <person name="Pichon C."/>
            <person name="Rouy Z."/>
            <person name="Ruf C.S."/>
            <person name="Schneider D."/>
            <person name="Tourret J."/>
            <person name="Vacherie B."/>
            <person name="Vallenet D."/>
            <person name="Medigue C."/>
            <person name="Rocha E.P.C."/>
            <person name="Denamur E."/>
        </authorList>
    </citation>
    <scope>NUCLEOTIDE SEQUENCE [LARGE SCALE GENOMIC DNA]</scope>
    <source>
        <strain>IAI1</strain>
    </source>
</reference>
<evidence type="ECO:0000255" key="1">
    <source>
        <dbReference type="HAMAP-Rule" id="MF_01042"/>
    </source>
</evidence>
<protein>
    <recommendedName>
        <fullName evidence="1">Ribosome rescue factor SmrB</fullName>
        <ecNumber evidence="1">3.1.-.-</ecNumber>
    </recommendedName>
</protein>
<comment type="function">
    <text evidence="1">Acts as a ribosome collision sensor. Detects stalled/collided disomes (pairs of ribosomes where the leading ribosome is stalled and a second ribosome has collided with it) and endonucleolytically cleaves mRNA at the 5' boundary of the stalled ribosome. Stalled/collided disomes form a new interface (primarily via the 30S subunits) that binds SmrB. Cleaved mRNA becomes available for tmRNA ligation, leading to ribosomal subunit dissociation and rescue of stalled ribosomes.</text>
</comment>
<comment type="subunit">
    <text evidence="1">Associates with collided ribosomes, but not with correctly translating polysomes.</text>
</comment>
<comment type="similarity">
    <text evidence="1">Belongs to the SmrB family.</text>
</comment>
<gene>
    <name evidence="1" type="primary">smrB</name>
    <name type="ordered locus">ECIAI1_2408</name>
</gene>
<keyword id="KW-0255">Endonuclease</keyword>
<keyword id="KW-0378">Hydrolase</keyword>
<keyword id="KW-0540">Nuclease</keyword>
<keyword id="KW-0694">RNA-binding</keyword>
<keyword id="KW-0699">rRNA-binding</keyword>
<accession>B7M6L2</accession>
<sequence length="183" mass="21013">MKKKTTLSEEDQALFRQLMAGTRKIKQDTIVHRPQRKKISEVPVKRLIQEQADASHYFSDEFQPLLNTEGPVKYVRPDVSHFEAKKLRRGDYSPELFLDLHGLTQLQAKQELGALIAACRREHVFCACVMHGHGKHILKQQTPLWLAQHPHVMAFHQAPKEYGGDAALLVLIEVEEWLPPELP</sequence>
<proteinExistence type="inferred from homology"/>